<comment type="function">
    <text evidence="1">Converts heme B (protoheme IX) to heme O by substitution of the vinyl group on carbon 2 of heme B porphyrin ring with a hydroxyethyl farnesyl side group.</text>
</comment>
<comment type="catalytic activity">
    <reaction evidence="1">
        <text>heme b + (2E,6E)-farnesyl diphosphate + H2O = Fe(II)-heme o + diphosphate</text>
        <dbReference type="Rhea" id="RHEA:28070"/>
        <dbReference type="ChEBI" id="CHEBI:15377"/>
        <dbReference type="ChEBI" id="CHEBI:33019"/>
        <dbReference type="ChEBI" id="CHEBI:60344"/>
        <dbReference type="ChEBI" id="CHEBI:60530"/>
        <dbReference type="ChEBI" id="CHEBI:175763"/>
        <dbReference type="EC" id="2.5.1.141"/>
    </reaction>
</comment>
<comment type="pathway">
    <text evidence="1">Porphyrin-containing compound metabolism; heme O biosynthesis; heme O from protoheme: step 1/1.</text>
</comment>
<comment type="subcellular location">
    <subcellularLocation>
        <location evidence="1">Cell inner membrane</location>
        <topology evidence="1">Multi-pass membrane protein</topology>
    </subcellularLocation>
</comment>
<comment type="miscellaneous">
    <text evidence="1">Carbon 2 of the heme B porphyrin ring is defined according to the Fischer nomenclature.</text>
</comment>
<comment type="similarity">
    <text evidence="1">Belongs to the UbiA prenyltransferase family. Protoheme IX farnesyltransferase subfamily.</text>
</comment>
<keyword id="KW-0997">Cell inner membrane</keyword>
<keyword id="KW-1003">Cell membrane</keyword>
<keyword id="KW-0350">Heme biosynthesis</keyword>
<keyword id="KW-0472">Membrane</keyword>
<keyword id="KW-0808">Transferase</keyword>
<keyword id="KW-0812">Transmembrane</keyword>
<keyword id="KW-1133">Transmembrane helix</keyword>
<proteinExistence type="inferred from homology"/>
<dbReference type="EC" id="2.5.1.141" evidence="1"/>
<dbReference type="EMBL" id="CP000766">
    <property type="protein sequence ID" value="ABY72434.1"/>
    <property type="molecule type" value="Genomic_DNA"/>
</dbReference>
<dbReference type="SMR" id="B0BX58"/>
<dbReference type="KEGG" id="rrj:RrIowa_0560"/>
<dbReference type="eggNOG" id="COG0109">
    <property type="taxonomic scope" value="Bacteria"/>
</dbReference>
<dbReference type="HOGENOM" id="CLU_029631_0_2_5"/>
<dbReference type="UniPathway" id="UPA00834">
    <property type="reaction ID" value="UER00712"/>
</dbReference>
<dbReference type="Proteomes" id="UP000000796">
    <property type="component" value="Chromosome"/>
</dbReference>
<dbReference type="GO" id="GO:0005886">
    <property type="term" value="C:plasma membrane"/>
    <property type="evidence" value="ECO:0007669"/>
    <property type="project" value="UniProtKB-SubCell"/>
</dbReference>
<dbReference type="GO" id="GO:0008495">
    <property type="term" value="F:protoheme IX farnesyltransferase activity"/>
    <property type="evidence" value="ECO:0007669"/>
    <property type="project" value="UniProtKB-UniRule"/>
</dbReference>
<dbReference type="GO" id="GO:0048034">
    <property type="term" value="P:heme O biosynthetic process"/>
    <property type="evidence" value="ECO:0007669"/>
    <property type="project" value="UniProtKB-UniRule"/>
</dbReference>
<dbReference type="CDD" id="cd13957">
    <property type="entry name" value="PT_UbiA_Cox10"/>
    <property type="match status" value="1"/>
</dbReference>
<dbReference type="Gene3D" id="1.10.357.140">
    <property type="entry name" value="UbiA prenyltransferase"/>
    <property type="match status" value="1"/>
</dbReference>
<dbReference type="HAMAP" id="MF_00154">
    <property type="entry name" value="CyoE_CtaB"/>
    <property type="match status" value="1"/>
</dbReference>
<dbReference type="InterPro" id="IPR006369">
    <property type="entry name" value="Protohaem_IX_farnesylTrfase"/>
</dbReference>
<dbReference type="InterPro" id="IPR000537">
    <property type="entry name" value="UbiA_prenyltransferase"/>
</dbReference>
<dbReference type="InterPro" id="IPR030470">
    <property type="entry name" value="UbiA_prenylTrfase_CS"/>
</dbReference>
<dbReference type="InterPro" id="IPR044878">
    <property type="entry name" value="UbiA_sf"/>
</dbReference>
<dbReference type="NCBIfam" id="TIGR01473">
    <property type="entry name" value="cyoE_ctaB"/>
    <property type="match status" value="1"/>
</dbReference>
<dbReference type="NCBIfam" id="NF003349">
    <property type="entry name" value="PRK04375.1-2"/>
    <property type="match status" value="1"/>
</dbReference>
<dbReference type="PANTHER" id="PTHR43448:SF7">
    <property type="entry name" value="4-HYDROXYBENZOATE SOLANESYLTRANSFERASE"/>
    <property type="match status" value="1"/>
</dbReference>
<dbReference type="PANTHER" id="PTHR43448">
    <property type="entry name" value="PROTOHEME IX FARNESYLTRANSFERASE, MITOCHONDRIAL"/>
    <property type="match status" value="1"/>
</dbReference>
<dbReference type="Pfam" id="PF01040">
    <property type="entry name" value="UbiA"/>
    <property type="match status" value="1"/>
</dbReference>
<dbReference type="PROSITE" id="PS00943">
    <property type="entry name" value="UBIA"/>
    <property type="match status" value="1"/>
</dbReference>
<sequence>MSSLVRPINLGKINNSQSTVKDYILLMKPRVMSLVIFTGFVGMWLAPYSVHPFIAGIAVVCIALGAGSAGAINMWYDRDIDSLMKRTQKRPIVRGVIESDEALSFGLITGFFAVFFMALCVNLLASFLLLFTIFYYICIYTIWLKRRSIQNIVIGGVSGALPPVIGYAAVSNTISLESIILFLIIFIWTPPHSWALALFCNDDYKNCKVPMMPAVKGTVYTKKQILIYSILLFIVSLMPFFIGMNNFIYLIISGILGVVFLYYAGSLFYDTPDNKQAKRFFAYSIFYLFFIFLLLYSTNTISTIS</sequence>
<evidence type="ECO:0000255" key="1">
    <source>
        <dbReference type="HAMAP-Rule" id="MF_00154"/>
    </source>
</evidence>
<gene>
    <name evidence="1" type="primary">ctaB</name>
    <name type="ordered locus">RrIowa_0560</name>
</gene>
<organism>
    <name type="scientific">Rickettsia rickettsii (strain Iowa)</name>
    <dbReference type="NCBI Taxonomy" id="452659"/>
    <lineage>
        <taxon>Bacteria</taxon>
        <taxon>Pseudomonadati</taxon>
        <taxon>Pseudomonadota</taxon>
        <taxon>Alphaproteobacteria</taxon>
        <taxon>Rickettsiales</taxon>
        <taxon>Rickettsiaceae</taxon>
        <taxon>Rickettsieae</taxon>
        <taxon>Rickettsia</taxon>
        <taxon>spotted fever group</taxon>
    </lineage>
</organism>
<name>COXX_RICRO</name>
<feature type="chain" id="PRO_0000346068" description="Protoheme IX farnesyltransferase">
    <location>
        <begin position="1"/>
        <end position="305"/>
    </location>
</feature>
<feature type="transmembrane region" description="Helical" evidence="1">
    <location>
        <begin position="31"/>
        <end position="51"/>
    </location>
</feature>
<feature type="transmembrane region" description="Helical" evidence="1">
    <location>
        <begin position="52"/>
        <end position="72"/>
    </location>
</feature>
<feature type="transmembrane region" description="Helical" evidence="1">
    <location>
        <begin position="96"/>
        <end position="118"/>
    </location>
</feature>
<feature type="transmembrane region" description="Helical" evidence="1">
    <location>
        <begin position="123"/>
        <end position="145"/>
    </location>
</feature>
<feature type="transmembrane region" description="Helical" evidence="1">
    <location>
        <begin position="151"/>
        <end position="171"/>
    </location>
</feature>
<feature type="transmembrane region" description="Helical" evidence="1">
    <location>
        <begin position="179"/>
        <end position="199"/>
    </location>
</feature>
<feature type="transmembrane region" description="Helical" evidence="1">
    <location>
        <begin position="225"/>
        <end position="245"/>
    </location>
</feature>
<feature type="transmembrane region" description="Helical" evidence="1">
    <location>
        <begin position="247"/>
        <end position="267"/>
    </location>
</feature>
<feature type="transmembrane region" description="Helical" evidence="1">
    <location>
        <begin position="281"/>
        <end position="301"/>
    </location>
</feature>
<reference key="1">
    <citation type="journal article" date="2008" name="Infect. Immun.">
        <title>Genomic comparison of virulent Rickettsia rickettsii Sheila Smith and avirulent Rickettsia rickettsii Iowa.</title>
        <authorList>
            <person name="Ellison D.W."/>
            <person name="Clark T.R."/>
            <person name="Sturdevant D.E."/>
            <person name="Virtaneva K."/>
            <person name="Porcella S.F."/>
            <person name="Hackstadt T."/>
        </authorList>
    </citation>
    <scope>NUCLEOTIDE SEQUENCE [LARGE SCALE GENOMIC DNA]</scope>
    <source>
        <strain>Iowa</strain>
    </source>
</reference>
<accession>B0BX58</accession>
<protein>
    <recommendedName>
        <fullName evidence="1">Protoheme IX farnesyltransferase</fullName>
        <ecNumber evidence="1">2.5.1.141</ecNumber>
    </recommendedName>
    <alternativeName>
        <fullName evidence="1">Heme B farnesyltransferase</fullName>
    </alternativeName>
    <alternativeName>
        <fullName evidence="1">Heme O synthase</fullName>
    </alternativeName>
</protein>